<protein>
    <recommendedName>
        <fullName>Red pigment-concentrating hormone</fullName>
        <shortName>RPCH</shortName>
    </recommendedName>
</protein>
<feature type="peptide" id="PRO_0000043444" description="Red pigment-concentrating hormone">
    <location>
        <begin position="1"/>
        <end position="8"/>
    </location>
</feature>
<feature type="modified residue" description="Pyrrolidone carboxylic acid" evidence="1">
    <location>
        <position position="1"/>
    </location>
</feature>
<feature type="modified residue" description="Tryptophan amide" evidence="1">
    <location>
        <position position="8"/>
    </location>
</feature>
<evidence type="ECO:0000269" key="1">
    <source>
    </source>
</evidence>
<evidence type="ECO:0000305" key="2"/>
<sequence>QLNFSPGW</sequence>
<keyword id="KW-0027">Amidation</keyword>
<keyword id="KW-0903">Direct protein sequencing</keyword>
<keyword id="KW-0372">Hormone</keyword>
<keyword id="KW-0608">Pigment</keyword>
<keyword id="KW-0873">Pyrrolidone carboxylic acid</keyword>
<keyword id="KW-0964">Secreted</keyword>
<name>RPCH_PANBO</name>
<accession>P08939</accession>
<comment type="function">
    <text>This hormone adapts the animal to light backgrounds by stimulating concentration of the pigment of its red body-chromatophores.</text>
</comment>
<comment type="subcellular location">
    <subcellularLocation>
        <location>Secreted</location>
    </subcellularLocation>
</comment>
<comment type="similarity">
    <text evidence="2">Belongs to the AKH/HRTH/RPCH family.</text>
</comment>
<dbReference type="PIR" id="A61348">
    <property type="entry name" value="A61348"/>
</dbReference>
<dbReference type="GO" id="GO:0005576">
    <property type="term" value="C:extracellular region"/>
    <property type="evidence" value="ECO:0007669"/>
    <property type="project" value="UniProtKB-SubCell"/>
</dbReference>
<dbReference type="GO" id="GO:0005179">
    <property type="term" value="F:hormone activity"/>
    <property type="evidence" value="ECO:0007669"/>
    <property type="project" value="UniProtKB-KW"/>
</dbReference>
<dbReference type="GO" id="GO:0031409">
    <property type="term" value="F:pigment binding"/>
    <property type="evidence" value="ECO:0007669"/>
    <property type="project" value="UniProtKB-KW"/>
</dbReference>
<dbReference type="InterPro" id="IPR002047">
    <property type="entry name" value="Adipokinetic_hormone_CS"/>
</dbReference>
<dbReference type="PROSITE" id="PS00256">
    <property type="entry name" value="AKH"/>
    <property type="match status" value="1"/>
</dbReference>
<reference key="1">
    <citation type="journal article" date="1974" name="Biochim. Biophys. Acta">
        <title>Structure of the red-pigment-concentrating hormone of the shrimp, Pandalus borealis.</title>
        <authorList>
            <person name="Fernlund P."/>
        </authorList>
    </citation>
    <scope>PROTEIN SEQUENCE</scope>
    <scope>PYROGLUTAMATE FORMATION AT GLN-1</scope>
    <scope>AMIDATION AT TRP-8</scope>
</reference>
<proteinExistence type="evidence at protein level"/>
<organism>
    <name type="scientific">Pandalus borealis</name>
    <name type="common">Northern red shrimp</name>
    <dbReference type="NCBI Taxonomy" id="6703"/>
    <lineage>
        <taxon>Eukaryota</taxon>
        <taxon>Metazoa</taxon>
        <taxon>Ecdysozoa</taxon>
        <taxon>Arthropoda</taxon>
        <taxon>Crustacea</taxon>
        <taxon>Multicrustacea</taxon>
        <taxon>Malacostraca</taxon>
        <taxon>Eumalacostraca</taxon>
        <taxon>Eucarida</taxon>
        <taxon>Decapoda</taxon>
        <taxon>Pleocyemata</taxon>
        <taxon>Caridea</taxon>
        <taxon>Pandaloidea</taxon>
        <taxon>Pandalidae</taxon>
        <taxon>Pandalus</taxon>
    </lineage>
</organism>